<organism>
    <name type="scientific">Trimeresurus albolabris</name>
    <name type="common">White-lipped pit viper</name>
    <name type="synonym">Cryptelytrops albolabris</name>
    <dbReference type="NCBI Taxonomy" id="8765"/>
    <lineage>
        <taxon>Eukaryota</taxon>
        <taxon>Metazoa</taxon>
        <taxon>Chordata</taxon>
        <taxon>Craniata</taxon>
        <taxon>Vertebrata</taxon>
        <taxon>Euteleostomi</taxon>
        <taxon>Lepidosauria</taxon>
        <taxon>Squamata</taxon>
        <taxon>Bifurcata</taxon>
        <taxon>Unidentata</taxon>
        <taxon>Episquamata</taxon>
        <taxon>Toxicofera</taxon>
        <taxon>Serpentes</taxon>
        <taxon>Colubroidea</taxon>
        <taxon>Viperidae</taxon>
        <taxon>Crotalinae</taxon>
        <taxon>Trimeresurus</taxon>
    </lineage>
</organism>
<sequence length="134" mass="15557">DFHCLPGWSAYDQYCYRVFNEPKNWEDAERFCAKQADSGHLVSIETMGEADFVAQLISENIQSEKHYVWIGLKVQNKEQQCSSEWSDGSSVTYENLIKLYMRKCGALEQESGFRKWINLGCIQLNPFVCKFPPQ</sequence>
<dbReference type="SMR" id="P81112"/>
<dbReference type="GO" id="GO:0005576">
    <property type="term" value="C:extracellular region"/>
    <property type="evidence" value="ECO:0007669"/>
    <property type="project" value="UniProtKB-SubCell"/>
</dbReference>
<dbReference type="GO" id="GO:0090729">
    <property type="term" value="F:toxin activity"/>
    <property type="evidence" value="ECO:0007669"/>
    <property type="project" value="UniProtKB-KW"/>
</dbReference>
<dbReference type="FunFam" id="3.10.100.10:FF:000087">
    <property type="entry name" value="Snaclec rhodocetin subunit delta"/>
    <property type="match status" value="1"/>
</dbReference>
<dbReference type="Gene3D" id="3.10.100.10">
    <property type="entry name" value="Mannose-Binding Protein A, subunit A"/>
    <property type="match status" value="1"/>
</dbReference>
<dbReference type="InterPro" id="IPR001304">
    <property type="entry name" value="C-type_lectin-like"/>
</dbReference>
<dbReference type="InterPro" id="IPR016186">
    <property type="entry name" value="C-type_lectin-like/link_sf"/>
</dbReference>
<dbReference type="InterPro" id="IPR050111">
    <property type="entry name" value="C-type_lectin/snaclec_domain"/>
</dbReference>
<dbReference type="InterPro" id="IPR018378">
    <property type="entry name" value="C-type_lectin_CS"/>
</dbReference>
<dbReference type="InterPro" id="IPR016187">
    <property type="entry name" value="CTDL_fold"/>
</dbReference>
<dbReference type="PANTHER" id="PTHR22803">
    <property type="entry name" value="MANNOSE, PHOSPHOLIPASE, LECTIN RECEPTOR RELATED"/>
    <property type="match status" value="1"/>
</dbReference>
<dbReference type="Pfam" id="PF00059">
    <property type="entry name" value="Lectin_C"/>
    <property type="match status" value="1"/>
</dbReference>
<dbReference type="PRINTS" id="PR01504">
    <property type="entry name" value="PNCREATITSAP"/>
</dbReference>
<dbReference type="SMART" id="SM00034">
    <property type="entry name" value="CLECT"/>
    <property type="match status" value="1"/>
</dbReference>
<dbReference type="SUPFAM" id="SSF56436">
    <property type="entry name" value="C-type lectin-like"/>
    <property type="match status" value="1"/>
</dbReference>
<dbReference type="PROSITE" id="PS00615">
    <property type="entry name" value="C_TYPE_LECTIN_1"/>
    <property type="match status" value="1"/>
</dbReference>
<dbReference type="PROSITE" id="PS50041">
    <property type="entry name" value="C_TYPE_LECTIN_2"/>
    <property type="match status" value="1"/>
</dbReference>
<keyword id="KW-0903">Direct protein sequencing</keyword>
<keyword id="KW-1015">Disulfide bond</keyword>
<keyword id="KW-1199">Hemostasis impairing toxin</keyword>
<keyword id="KW-1202">Platelet aggregation activating toxin</keyword>
<keyword id="KW-0964">Secreted</keyword>
<keyword id="KW-0800">Toxin</keyword>
<comment type="function">
    <text evidence="2 3 4 5">Potent platelet activator that aggregates platelets via both GPIbalpha (GP1BA) and GPVI (GP6). Induces a tyrosine phosphorylation profile in platelets that resembles this produced by collagen, involving the time dependent tyrosine phosphorylation of Fc receptor gamma chain (FCGR1A), phospholipase Cgamma2 (PLCG2), and LAT.</text>
</comment>
<comment type="subunit">
    <text>Heterotetramer of the subunits alpha, alpha', beta and beta'; disulfide-linked.</text>
</comment>
<comment type="subcellular location">
    <subcellularLocation>
        <location evidence="4">Secreted</location>
    </subcellularLocation>
</comment>
<comment type="tissue specificity">
    <text evidence="4">Expressed by the venom gland.</text>
</comment>
<comment type="similarity">
    <text evidence="6">Belongs to the snaclec family.</text>
</comment>
<proteinExistence type="evidence at protein level"/>
<name>SLA2_TRIAB</name>
<protein>
    <recommendedName>
        <fullName>Snaclec alboaggregin-A subunit alpha'</fullName>
    </recommendedName>
    <alternativeName>
        <fullName>Alboaggregin-A subunit 2</fullName>
        <shortName>AL-A subunit 2</shortName>
    </alternativeName>
</protein>
<feature type="chain" id="PRO_0000046709" description="Snaclec alboaggregin-A subunit alpha'">
    <location>
        <begin position="1"/>
        <end position="134"/>
    </location>
</feature>
<feature type="domain" description="C-type lectin" evidence="1">
    <location>
        <begin position="1"/>
        <end position="134"/>
    </location>
</feature>
<feature type="disulfide bond" evidence="1">
    <location>
        <begin position="4"/>
        <end position="15"/>
    </location>
</feature>
<feature type="disulfide bond" evidence="1">
    <location>
        <begin position="32"/>
        <end position="129"/>
    </location>
</feature>
<feature type="disulfide bond" description="Interchain" evidence="1">
    <location>
        <position position="81"/>
    </location>
</feature>
<feature type="disulfide bond" evidence="1">
    <location>
        <begin position="104"/>
        <end position="121"/>
    </location>
</feature>
<accession>P81112</accession>
<evidence type="ECO:0000255" key="1">
    <source>
        <dbReference type="PROSITE-ProRule" id="PRU00040"/>
    </source>
</evidence>
<evidence type="ECO:0000269" key="2">
    <source>
    </source>
</evidence>
<evidence type="ECO:0000269" key="3">
    <source>
    </source>
</evidence>
<evidence type="ECO:0000269" key="4">
    <source>
    </source>
</evidence>
<evidence type="ECO:0000269" key="5">
    <source>
    </source>
</evidence>
<evidence type="ECO:0000305" key="6"/>
<reference key="1">
    <citation type="journal article" date="1998" name="Thromb. Haemost.">
        <title>Alboaggregins A and B. Structure and interaction with human platelets.</title>
        <authorList>
            <person name="Kowalska M.A."/>
            <person name="Tan L."/>
            <person name="Holt J.C."/>
            <person name="Peng M."/>
            <person name="Karczewski J."/>
            <person name="Calvete J.J."/>
            <person name="Niewiarowski S."/>
        </authorList>
    </citation>
    <scope>PROTEIN SEQUENCE</scope>
    <scope>FUNCTION</scope>
    <source>
        <tissue>Venom</tissue>
    </source>
</reference>
<reference key="2">
    <citation type="journal article" date="2001" name="Blood">
        <title>Alboaggregin A activates platelets by a mechanism involving glycoprotein VI as well as glycoprotein Ib.</title>
        <authorList>
            <person name="Dormann D."/>
            <person name="Clemetson J.M."/>
            <person name="Navdaev A."/>
            <person name="Kehrel B.E."/>
            <person name="Clemetson K.J."/>
        </authorList>
    </citation>
    <scope>PARTIAL PROTEIN SEQUENCE</scope>
    <scope>FUNCTION</scope>
    <source>
        <tissue>Venom</tissue>
    </source>
</reference>
<reference key="3">
    <citation type="journal article" date="1996" name="Biochemistry">
        <title>Binding of a novel 50-kilodalton alboaggregin from Trimeresurus albolabris and related viper venom proteins to the platelet membrane glycoprotein Ib-IX-V complex. Effect on platelet aggregation and glycoprotein Ib-mediated platelet activation.</title>
        <authorList>
            <person name="Andrews R.K."/>
            <person name="Kroll M.H."/>
            <person name="Ward C.M."/>
            <person name="Rose J.W."/>
            <person name="Scarborough R.M."/>
            <person name="Smith A.I."/>
            <person name="Lopez J.A."/>
            <person name="Berndt M.C."/>
        </authorList>
    </citation>
    <scope>FUNCTION</scope>
    <scope>SUBCELLULAR LOCATION</scope>
    <scope>TISSUE SPECIFICITY</scope>
    <source>
        <tissue>Venom</tissue>
    </source>
</reference>
<reference key="4">
    <citation type="journal article" date="2001" name="Blood">
        <title>The snake venom toxin alboaggregin-A activates glycoprotein VI.</title>
        <authorList>
            <person name="Asazuma N."/>
            <person name="Marshall S.J."/>
            <person name="Berlanga O."/>
            <person name="Snell D."/>
            <person name="Poole A.W."/>
            <person name="Berndt M.C."/>
            <person name="Andrews R.K."/>
            <person name="Watson S.P."/>
        </authorList>
    </citation>
    <scope>FUNCTION</scope>
    <source>
        <tissue>Venom</tissue>
    </source>
</reference>